<feature type="chain" id="PRO_0000137344" description="Small ribosomal subunit protein eS6">
    <location>
        <begin position="1"/>
        <end position="129"/>
    </location>
</feature>
<protein>
    <recommendedName>
        <fullName evidence="1">Small ribosomal subunit protein eS6</fullName>
    </recommendedName>
    <alternativeName>
        <fullName evidence="2">30S ribosomal protein S6e</fullName>
    </alternativeName>
</protein>
<comment type="similarity">
    <text evidence="1">Belongs to the eukaryotic ribosomal protein eS6 family.</text>
</comment>
<accession>O29739</accession>
<dbReference type="EMBL" id="AE000782">
    <property type="protein sequence ID" value="AAB90719.1"/>
    <property type="molecule type" value="Genomic_DNA"/>
</dbReference>
<dbReference type="PIR" id="G69313">
    <property type="entry name" value="G69313"/>
</dbReference>
<dbReference type="RefSeq" id="WP_010878018.1">
    <property type="nucleotide sequence ID" value="NC_000917.1"/>
</dbReference>
<dbReference type="SMR" id="O29739"/>
<dbReference type="STRING" id="224325.AF_0511"/>
<dbReference type="PaxDb" id="224325-AF_0511"/>
<dbReference type="EnsemblBacteria" id="AAB90719">
    <property type="protein sequence ID" value="AAB90719"/>
    <property type="gene ID" value="AF_0511"/>
</dbReference>
<dbReference type="KEGG" id="afu:AF_0511"/>
<dbReference type="eggNOG" id="arCOG01946">
    <property type="taxonomic scope" value="Archaea"/>
</dbReference>
<dbReference type="HOGENOM" id="CLU_109671_1_1_2"/>
<dbReference type="OrthoDB" id="7793at2157"/>
<dbReference type="PhylomeDB" id="O29739"/>
<dbReference type="Proteomes" id="UP000002199">
    <property type="component" value="Chromosome"/>
</dbReference>
<dbReference type="GO" id="GO:1990904">
    <property type="term" value="C:ribonucleoprotein complex"/>
    <property type="evidence" value="ECO:0007669"/>
    <property type="project" value="UniProtKB-KW"/>
</dbReference>
<dbReference type="GO" id="GO:0005840">
    <property type="term" value="C:ribosome"/>
    <property type="evidence" value="ECO:0007669"/>
    <property type="project" value="UniProtKB-KW"/>
</dbReference>
<dbReference type="GO" id="GO:0003735">
    <property type="term" value="F:structural constituent of ribosome"/>
    <property type="evidence" value="ECO:0007669"/>
    <property type="project" value="InterPro"/>
</dbReference>
<dbReference type="GO" id="GO:0006412">
    <property type="term" value="P:translation"/>
    <property type="evidence" value="ECO:0007669"/>
    <property type="project" value="UniProtKB-UniRule"/>
</dbReference>
<dbReference type="HAMAP" id="MF_00512">
    <property type="entry name" value="Ribosomal_eS6"/>
    <property type="match status" value="1"/>
</dbReference>
<dbReference type="InterPro" id="IPR001377">
    <property type="entry name" value="Ribosomal_eS6"/>
</dbReference>
<dbReference type="InterPro" id="IPR020924">
    <property type="entry name" value="Ribosomal_eS6_arc"/>
</dbReference>
<dbReference type="InterPro" id="IPR018282">
    <property type="entry name" value="Ribosomal_eS6_CS"/>
</dbReference>
<dbReference type="NCBIfam" id="NF003294">
    <property type="entry name" value="PRK04290.1-3"/>
    <property type="match status" value="1"/>
</dbReference>
<dbReference type="PANTHER" id="PTHR11502">
    <property type="entry name" value="40S RIBOSOMAL PROTEIN S6"/>
    <property type="match status" value="1"/>
</dbReference>
<dbReference type="Pfam" id="PF01092">
    <property type="entry name" value="Ribosomal_S6e"/>
    <property type="match status" value="1"/>
</dbReference>
<dbReference type="SMART" id="SM01405">
    <property type="entry name" value="Ribosomal_S6e"/>
    <property type="match status" value="1"/>
</dbReference>
<dbReference type="PROSITE" id="PS00578">
    <property type="entry name" value="RIBOSOMAL_S6E"/>
    <property type="match status" value="1"/>
</dbReference>
<name>RS6E_ARCFU</name>
<sequence>MEFRVVISDPKTGRAYQKVVEGANANRLIGKQIGDVISGTIVDLPPDYELKITGGTDRDGFPMRPDLPGTARRRLLLSGGVGFRPKEKGLRKRKGVRGRVISKDILQINTVVVKHGKVPLEEIFKQKEE</sequence>
<evidence type="ECO:0000255" key="1">
    <source>
        <dbReference type="HAMAP-Rule" id="MF_00512"/>
    </source>
</evidence>
<evidence type="ECO:0000305" key="2"/>
<gene>
    <name evidence="1" type="primary">rps6e</name>
    <name type="ordered locus">AF_0511</name>
</gene>
<keyword id="KW-1185">Reference proteome</keyword>
<keyword id="KW-0687">Ribonucleoprotein</keyword>
<keyword id="KW-0689">Ribosomal protein</keyword>
<organism>
    <name type="scientific">Archaeoglobus fulgidus (strain ATCC 49558 / DSM 4304 / JCM 9628 / NBRC 100126 / VC-16)</name>
    <dbReference type="NCBI Taxonomy" id="224325"/>
    <lineage>
        <taxon>Archaea</taxon>
        <taxon>Methanobacteriati</taxon>
        <taxon>Methanobacteriota</taxon>
        <taxon>Archaeoglobi</taxon>
        <taxon>Archaeoglobales</taxon>
        <taxon>Archaeoglobaceae</taxon>
        <taxon>Archaeoglobus</taxon>
    </lineage>
</organism>
<proteinExistence type="inferred from homology"/>
<reference key="1">
    <citation type="journal article" date="1997" name="Nature">
        <title>The complete genome sequence of the hyperthermophilic, sulphate-reducing archaeon Archaeoglobus fulgidus.</title>
        <authorList>
            <person name="Klenk H.-P."/>
            <person name="Clayton R.A."/>
            <person name="Tomb J.-F."/>
            <person name="White O."/>
            <person name="Nelson K.E."/>
            <person name="Ketchum K.A."/>
            <person name="Dodson R.J."/>
            <person name="Gwinn M.L."/>
            <person name="Hickey E.K."/>
            <person name="Peterson J.D."/>
            <person name="Richardson D.L."/>
            <person name="Kerlavage A.R."/>
            <person name="Graham D.E."/>
            <person name="Kyrpides N.C."/>
            <person name="Fleischmann R.D."/>
            <person name="Quackenbush J."/>
            <person name="Lee N.H."/>
            <person name="Sutton G.G."/>
            <person name="Gill S.R."/>
            <person name="Kirkness E.F."/>
            <person name="Dougherty B.A."/>
            <person name="McKenney K."/>
            <person name="Adams M.D."/>
            <person name="Loftus B.J."/>
            <person name="Peterson S.N."/>
            <person name="Reich C.I."/>
            <person name="McNeil L.K."/>
            <person name="Badger J.H."/>
            <person name="Glodek A."/>
            <person name="Zhou L."/>
            <person name="Overbeek R."/>
            <person name="Gocayne J.D."/>
            <person name="Weidman J.F."/>
            <person name="McDonald L.A."/>
            <person name="Utterback T.R."/>
            <person name="Cotton M.D."/>
            <person name="Spriggs T."/>
            <person name="Artiach P."/>
            <person name="Kaine B.P."/>
            <person name="Sykes S.M."/>
            <person name="Sadow P.W."/>
            <person name="D'Andrea K.P."/>
            <person name="Bowman C."/>
            <person name="Fujii C."/>
            <person name="Garland S.A."/>
            <person name="Mason T.M."/>
            <person name="Olsen G.J."/>
            <person name="Fraser C.M."/>
            <person name="Smith H.O."/>
            <person name="Woese C.R."/>
            <person name="Venter J.C."/>
        </authorList>
    </citation>
    <scope>NUCLEOTIDE SEQUENCE [LARGE SCALE GENOMIC DNA]</scope>
    <source>
        <strain>ATCC 49558 / DSM 4304 / JCM 9628 / NBRC 100126 / VC-16</strain>
    </source>
</reference>